<organism>
    <name type="scientific">Shewanella baltica (strain OS195)</name>
    <dbReference type="NCBI Taxonomy" id="399599"/>
    <lineage>
        <taxon>Bacteria</taxon>
        <taxon>Pseudomonadati</taxon>
        <taxon>Pseudomonadota</taxon>
        <taxon>Gammaproteobacteria</taxon>
        <taxon>Alteromonadales</taxon>
        <taxon>Shewanellaceae</taxon>
        <taxon>Shewanella</taxon>
    </lineage>
</organism>
<gene>
    <name evidence="1" type="primary">murC</name>
    <name type="ordered locus">Sbal195_0414</name>
</gene>
<protein>
    <recommendedName>
        <fullName evidence="1">UDP-N-acetylmuramate--L-alanine ligase</fullName>
        <ecNumber evidence="1">6.3.2.8</ecNumber>
    </recommendedName>
    <alternativeName>
        <fullName evidence="1">UDP-N-acetylmuramoyl-L-alanine synthetase</fullName>
    </alternativeName>
</protein>
<keyword id="KW-0067">ATP-binding</keyword>
<keyword id="KW-0131">Cell cycle</keyword>
<keyword id="KW-0132">Cell division</keyword>
<keyword id="KW-0133">Cell shape</keyword>
<keyword id="KW-0961">Cell wall biogenesis/degradation</keyword>
<keyword id="KW-0963">Cytoplasm</keyword>
<keyword id="KW-0436">Ligase</keyword>
<keyword id="KW-0547">Nucleotide-binding</keyword>
<keyword id="KW-0573">Peptidoglycan synthesis</keyword>
<reference key="1">
    <citation type="submission" date="2007-11" db="EMBL/GenBank/DDBJ databases">
        <title>Complete sequence of chromosome of Shewanella baltica OS195.</title>
        <authorList>
            <consortium name="US DOE Joint Genome Institute"/>
            <person name="Copeland A."/>
            <person name="Lucas S."/>
            <person name="Lapidus A."/>
            <person name="Barry K."/>
            <person name="Glavina del Rio T."/>
            <person name="Dalin E."/>
            <person name="Tice H."/>
            <person name="Pitluck S."/>
            <person name="Chain P."/>
            <person name="Malfatti S."/>
            <person name="Shin M."/>
            <person name="Vergez L."/>
            <person name="Schmutz J."/>
            <person name="Larimer F."/>
            <person name="Land M."/>
            <person name="Hauser L."/>
            <person name="Kyrpides N."/>
            <person name="Kim E."/>
            <person name="Brettar I."/>
            <person name="Rodrigues J."/>
            <person name="Konstantinidis K."/>
            <person name="Klappenbach J."/>
            <person name="Hofle M."/>
            <person name="Tiedje J."/>
            <person name="Richardson P."/>
        </authorList>
    </citation>
    <scope>NUCLEOTIDE SEQUENCE [LARGE SCALE GENOMIC DNA]</scope>
    <source>
        <strain>OS195</strain>
    </source>
</reference>
<feature type="chain" id="PRO_1000074753" description="UDP-N-acetylmuramate--L-alanine ligase">
    <location>
        <begin position="1"/>
        <end position="488"/>
    </location>
</feature>
<feature type="binding site" evidence="1">
    <location>
        <begin position="127"/>
        <end position="133"/>
    </location>
    <ligand>
        <name>ATP</name>
        <dbReference type="ChEBI" id="CHEBI:30616"/>
    </ligand>
</feature>
<dbReference type="EC" id="6.3.2.8" evidence="1"/>
<dbReference type="EMBL" id="CP000891">
    <property type="protein sequence ID" value="ABX47595.1"/>
    <property type="molecule type" value="Genomic_DNA"/>
</dbReference>
<dbReference type="RefSeq" id="WP_006079895.1">
    <property type="nucleotide sequence ID" value="NC_009997.1"/>
</dbReference>
<dbReference type="SMR" id="A9KY30"/>
<dbReference type="GeneID" id="11770752"/>
<dbReference type="KEGG" id="sbn:Sbal195_0414"/>
<dbReference type="HOGENOM" id="CLU_028104_2_2_6"/>
<dbReference type="UniPathway" id="UPA00219"/>
<dbReference type="Proteomes" id="UP000000770">
    <property type="component" value="Chromosome"/>
</dbReference>
<dbReference type="GO" id="GO:0005737">
    <property type="term" value="C:cytoplasm"/>
    <property type="evidence" value="ECO:0007669"/>
    <property type="project" value="UniProtKB-SubCell"/>
</dbReference>
<dbReference type="GO" id="GO:0005524">
    <property type="term" value="F:ATP binding"/>
    <property type="evidence" value="ECO:0007669"/>
    <property type="project" value="UniProtKB-UniRule"/>
</dbReference>
<dbReference type="GO" id="GO:0008763">
    <property type="term" value="F:UDP-N-acetylmuramate-L-alanine ligase activity"/>
    <property type="evidence" value="ECO:0007669"/>
    <property type="project" value="UniProtKB-UniRule"/>
</dbReference>
<dbReference type="GO" id="GO:0051301">
    <property type="term" value="P:cell division"/>
    <property type="evidence" value="ECO:0007669"/>
    <property type="project" value="UniProtKB-KW"/>
</dbReference>
<dbReference type="GO" id="GO:0071555">
    <property type="term" value="P:cell wall organization"/>
    <property type="evidence" value="ECO:0007669"/>
    <property type="project" value="UniProtKB-KW"/>
</dbReference>
<dbReference type="GO" id="GO:0009252">
    <property type="term" value="P:peptidoglycan biosynthetic process"/>
    <property type="evidence" value="ECO:0007669"/>
    <property type="project" value="UniProtKB-UniRule"/>
</dbReference>
<dbReference type="GO" id="GO:0008360">
    <property type="term" value="P:regulation of cell shape"/>
    <property type="evidence" value="ECO:0007669"/>
    <property type="project" value="UniProtKB-KW"/>
</dbReference>
<dbReference type="FunFam" id="3.40.1190.10:FF:000001">
    <property type="entry name" value="UDP-N-acetylmuramate--L-alanine ligase"/>
    <property type="match status" value="1"/>
</dbReference>
<dbReference type="FunFam" id="3.40.50.720:FF:000046">
    <property type="entry name" value="UDP-N-acetylmuramate--L-alanine ligase"/>
    <property type="match status" value="1"/>
</dbReference>
<dbReference type="Gene3D" id="3.90.190.20">
    <property type="entry name" value="Mur ligase, C-terminal domain"/>
    <property type="match status" value="1"/>
</dbReference>
<dbReference type="Gene3D" id="3.40.1190.10">
    <property type="entry name" value="Mur-like, catalytic domain"/>
    <property type="match status" value="1"/>
</dbReference>
<dbReference type="Gene3D" id="3.40.50.720">
    <property type="entry name" value="NAD(P)-binding Rossmann-like Domain"/>
    <property type="match status" value="1"/>
</dbReference>
<dbReference type="HAMAP" id="MF_00046">
    <property type="entry name" value="MurC"/>
    <property type="match status" value="1"/>
</dbReference>
<dbReference type="InterPro" id="IPR036565">
    <property type="entry name" value="Mur-like_cat_sf"/>
</dbReference>
<dbReference type="InterPro" id="IPR004101">
    <property type="entry name" value="Mur_ligase_C"/>
</dbReference>
<dbReference type="InterPro" id="IPR036615">
    <property type="entry name" value="Mur_ligase_C_dom_sf"/>
</dbReference>
<dbReference type="InterPro" id="IPR013221">
    <property type="entry name" value="Mur_ligase_cen"/>
</dbReference>
<dbReference type="InterPro" id="IPR000713">
    <property type="entry name" value="Mur_ligase_N"/>
</dbReference>
<dbReference type="InterPro" id="IPR050061">
    <property type="entry name" value="MurCDEF_pg_biosynth"/>
</dbReference>
<dbReference type="InterPro" id="IPR005758">
    <property type="entry name" value="UDP-N-AcMur_Ala_ligase_MurC"/>
</dbReference>
<dbReference type="NCBIfam" id="TIGR01082">
    <property type="entry name" value="murC"/>
    <property type="match status" value="1"/>
</dbReference>
<dbReference type="PANTHER" id="PTHR43445:SF3">
    <property type="entry name" value="UDP-N-ACETYLMURAMATE--L-ALANINE LIGASE"/>
    <property type="match status" value="1"/>
</dbReference>
<dbReference type="PANTHER" id="PTHR43445">
    <property type="entry name" value="UDP-N-ACETYLMURAMATE--L-ALANINE LIGASE-RELATED"/>
    <property type="match status" value="1"/>
</dbReference>
<dbReference type="Pfam" id="PF01225">
    <property type="entry name" value="Mur_ligase"/>
    <property type="match status" value="1"/>
</dbReference>
<dbReference type="Pfam" id="PF02875">
    <property type="entry name" value="Mur_ligase_C"/>
    <property type="match status" value="1"/>
</dbReference>
<dbReference type="Pfam" id="PF08245">
    <property type="entry name" value="Mur_ligase_M"/>
    <property type="match status" value="1"/>
</dbReference>
<dbReference type="SUPFAM" id="SSF51984">
    <property type="entry name" value="MurCD N-terminal domain"/>
    <property type="match status" value="1"/>
</dbReference>
<dbReference type="SUPFAM" id="SSF53623">
    <property type="entry name" value="MurD-like peptide ligases, catalytic domain"/>
    <property type="match status" value="1"/>
</dbReference>
<dbReference type="SUPFAM" id="SSF53244">
    <property type="entry name" value="MurD-like peptide ligases, peptide-binding domain"/>
    <property type="match status" value="1"/>
</dbReference>
<comment type="function">
    <text evidence="1">Cell wall formation.</text>
</comment>
<comment type="catalytic activity">
    <reaction evidence="1">
        <text>UDP-N-acetyl-alpha-D-muramate + L-alanine + ATP = UDP-N-acetyl-alpha-D-muramoyl-L-alanine + ADP + phosphate + H(+)</text>
        <dbReference type="Rhea" id="RHEA:23372"/>
        <dbReference type="ChEBI" id="CHEBI:15378"/>
        <dbReference type="ChEBI" id="CHEBI:30616"/>
        <dbReference type="ChEBI" id="CHEBI:43474"/>
        <dbReference type="ChEBI" id="CHEBI:57972"/>
        <dbReference type="ChEBI" id="CHEBI:70757"/>
        <dbReference type="ChEBI" id="CHEBI:83898"/>
        <dbReference type="ChEBI" id="CHEBI:456216"/>
        <dbReference type="EC" id="6.3.2.8"/>
    </reaction>
</comment>
<comment type="pathway">
    <text evidence="1">Cell wall biogenesis; peptidoglycan biosynthesis.</text>
</comment>
<comment type="subcellular location">
    <subcellularLocation>
        <location evidence="1">Cytoplasm</location>
    </subcellularLocation>
</comment>
<comment type="similarity">
    <text evidence="1">Belongs to the MurCDEF family.</text>
</comment>
<proteinExistence type="inferred from homology"/>
<evidence type="ECO:0000255" key="1">
    <source>
        <dbReference type="HAMAP-Rule" id="MF_00046"/>
    </source>
</evidence>
<accession>A9KY30</accession>
<name>MURC_SHEB9</name>
<sequence>MTKTERYAQLRSMIPEMRRIKRIHFVGIGGAGMGGIAEVLVNEGYQVSGSDIAQNAVTDRLCLLGAKIQIGHAAENVQQVDVVVVSTAINLENPEILAAKELRIPIVRRAEMLAELMRYRHGVAIAGTHGKTTTTSLIASVYGQAGRDPTFVIGGLLNSAGTNARLGTSRYLIAEADESDASFLHLQPMVSVVTNIEADHMDTYGGDFEKLKSTFVDFLHNLPFYGVAVVCIDDAVVREIMPRIGRQLVTYGFSDDADVQALNFSQQGHQCRFTVRRKGKADLDLVLNLPGQHNVLNALAAIAVATEDEIDDSAITQALVEFQGIGRRFQHLGKFATPKGEVMLVDDYGHHPSEVAATIKAARAGWPDKRLVMAYQPHRYTRTRDLYEDFVEVLSQVDCLLLLDVYSAGEAPITGADGRALCRSIRLRGQLDPIFIASPDQLAEVLPDVLQEGDLLLTQGAGNIGALSRLLATTELGFAVAELPAQAS</sequence>